<feature type="chain" id="PRO_0000309446" description="UPF0502 protein XC_4228">
    <location>
        <begin position="1"/>
        <end position="222"/>
    </location>
</feature>
<name>Y4228_XANC8</name>
<proteinExistence type="inferred from homology"/>
<protein>
    <recommendedName>
        <fullName evidence="1">UPF0502 protein XC_4228</fullName>
    </recommendedName>
</protein>
<accession>Q4UNV7</accession>
<sequence length="222" mass="24079">MTETLPTPVLDTAQARVLGCLIEKEATTPDAYPLTVNAAQVAANQKTAREPVLTLQTGKVHHALRQLETLGLVRQQFSSRAERYEHRLGSALDLTRQQVAVIGLLLLRGPQTLGELFARSERLARFNDSDDVRHHLERLIQRGLAVQLPRASGQREDRYAHLLSGELDLDALQAAAARAAPSARSGADSSELEARVLSLETTVAELQDALSALQARLDAAGA</sequence>
<reference key="1">
    <citation type="journal article" date="2005" name="Genome Res.">
        <title>Comparative and functional genomic analyses of the pathogenicity of phytopathogen Xanthomonas campestris pv. campestris.</title>
        <authorList>
            <person name="Qian W."/>
            <person name="Jia Y."/>
            <person name="Ren S.-X."/>
            <person name="He Y.-Q."/>
            <person name="Feng J.-X."/>
            <person name="Lu L.-F."/>
            <person name="Sun Q."/>
            <person name="Ying G."/>
            <person name="Tang D.-J."/>
            <person name="Tang H."/>
            <person name="Wu W."/>
            <person name="Hao P."/>
            <person name="Wang L."/>
            <person name="Jiang B.-L."/>
            <person name="Zeng S."/>
            <person name="Gu W.-Y."/>
            <person name="Lu G."/>
            <person name="Rong L."/>
            <person name="Tian Y."/>
            <person name="Yao Z."/>
            <person name="Fu G."/>
            <person name="Chen B."/>
            <person name="Fang R."/>
            <person name="Qiang B."/>
            <person name="Chen Z."/>
            <person name="Zhao G.-P."/>
            <person name="Tang J.-L."/>
            <person name="He C."/>
        </authorList>
    </citation>
    <scope>NUCLEOTIDE SEQUENCE [LARGE SCALE GENOMIC DNA]</scope>
    <source>
        <strain>8004</strain>
    </source>
</reference>
<gene>
    <name type="ordered locus">XC_4228</name>
</gene>
<organism>
    <name type="scientific">Xanthomonas campestris pv. campestris (strain 8004)</name>
    <dbReference type="NCBI Taxonomy" id="314565"/>
    <lineage>
        <taxon>Bacteria</taxon>
        <taxon>Pseudomonadati</taxon>
        <taxon>Pseudomonadota</taxon>
        <taxon>Gammaproteobacteria</taxon>
        <taxon>Lysobacterales</taxon>
        <taxon>Lysobacteraceae</taxon>
        <taxon>Xanthomonas</taxon>
    </lineage>
</organism>
<dbReference type="EMBL" id="CP000050">
    <property type="protein sequence ID" value="AAY51266.1"/>
    <property type="molecule type" value="Genomic_DNA"/>
</dbReference>
<dbReference type="RefSeq" id="WP_011039205.1">
    <property type="nucleotide sequence ID" value="NZ_CP155948.1"/>
</dbReference>
<dbReference type="SMR" id="Q4UNV7"/>
<dbReference type="KEGG" id="xcb:XC_4228"/>
<dbReference type="HOGENOM" id="CLU_057831_2_0_6"/>
<dbReference type="Proteomes" id="UP000000420">
    <property type="component" value="Chromosome"/>
</dbReference>
<dbReference type="Gene3D" id="1.10.10.10">
    <property type="entry name" value="Winged helix-like DNA-binding domain superfamily/Winged helix DNA-binding domain"/>
    <property type="match status" value="2"/>
</dbReference>
<dbReference type="HAMAP" id="MF_01584">
    <property type="entry name" value="UPF0502"/>
    <property type="match status" value="1"/>
</dbReference>
<dbReference type="InterPro" id="IPR007432">
    <property type="entry name" value="DUF480"/>
</dbReference>
<dbReference type="InterPro" id="IPR036388">
    <property type="entry name" value="WH-like_DNA-bd_sf"/>
</dbReference>
<dbReference type="InterPro" id="IPR036390">
    <property type="entry name" value="WH_DNA-bd_sf"/>
</dbReference>
<dbReference type="PANTHER" id="PTHR38768">
    <property type="entry name" value="UPF0502 PROTEIN YCEH"/>
    <property type="match status" value="1"/>
</dbReference>
<dbReference type="PANTHER" id="PTHR38768:SF1">
    <property type="entry name" value="UPF0502 PROTEIN YCEH"/>
    <property type="match status" value="1"/>
</dbReference>
<dbReference type="Pfam" id="PF04337">
    <property type="entry name" value="DUF480"/>
    <property type="match status" value="1"/>
</dbReference>
<dbReference type="SUPFAM" id="SSF46785">
    <property type="entry name" value="Winged helix' DNA-binding domain"/>
    <property type="match status" value="2"/>
</dbReference>
<comment type="similarity">
    <text evidence="1">Belongs to the UPF0502 family.</text>
</comment>
<evidence type="ECO:0000255" key="1">
    <source>
        <dbReference type="HAMAP-Rule" id="MF_01584"/>
    </source>
</evidence>